<name>RL6_VIBCH</name>
<sequence length="177" mass="18808">MSRVAKAPVAIPAGVEVKLNGQEITIKGAKGELTRVFHNGVVIAQEDNQLTFGPREGVANAWAQAGTARALVKNMVVGVTEGFTKKLVLKGVGYRAAMKGNAVGLTLGFSHPVEHELPAGVKAECPSQTEIVLTGCDKQVVGQVAADIRSYRAPEPYKGKGIRYADENVRSKEAKKK</sequence>
<proteinExistence type="inferred from homology"/>
<comment type="function">
    <text evidence="1">This protein binds to the 23S rRNA, and is important in its secondary structure. It is located near the subunit interface in the base of the L7/L12 stalk, and near the tRNA binding site of the peptidyltransferase center.</text>
</comment>
<comment type="subunit">
    <text evidence="1">Part of the 50S ribosomal subunit.</text>
</comment>
<comment type="similarity">
    <text evidence="1">Belongs to the universal ribosomal protein uL6 family.</text>
</comment>
<keyword id="KW-1185">Reference proteome</keyword>
<keyword id="KW-0687">Ribonucleoprotein</keyword>
<keyword id="KW-0689">Ribosomal protein</keyword>
<keyword id="KW-0694">RNA-binding</keyword>
<keyword id="KW-0699">rRNA-binding</keyword>
<protein>
    <recommendedName>
        <fullName evidence="1">Large ribosomal subunit protein uL6</fullName>
    </recommendedName>
    <alternativeName>
        <fullName evidence="2">50S ribosomal protein L6</fullName>
    </alternativeName>
</protein>
<evidence type="ECO:0000255" key="1">
    <source>
        <dbReference type="HAMAP-Rule" id="MF_01365"/>
    </source>
</evidence>
<evidence type="ECO:0000305" key="2"/>
<dbReference type="EMBL" id="AE003852">
    <property type="protein sequence ID" value="AAF95722.1"/>
    <property type="molecule type" value="Genomic_DNA"/>
</dbReference>
<dbReference type="PIR" id="G82057">
    <property type="entry name" value="G82057"/>
</dbReference>
<dbReference type="RefSeq" id="NP_232209.1">
    <property type="nucleotide sequence ID" value="NC_002505.1"/>
</dbReference>
<dbReference type="RefSeq" id="WP_000091929.1">
    <property type="nucleotide sequence ID" value="NZ_LT906614.1"/>
</dbReference>
<dbReference type="SMR" id="Q9KNZ9"/>
<dbReference type="STRING" id="243277.VC_2581"/>
<dbReference type="DNASU" id="2615598"/>
<dbReference type="EnsemblBacteria" id="AAF95722">
    <property type="protein sequence ID" value="AAF95722"/>
    <property type="gene ID" value="VC_2581"/>
</dbReference>
<dbReference type="GeneID" id="69718815"/>
<dbReference type="KEGG" id="vch:VC_2581"/>
<dbReference type="PATRIC" id="fig|243277.26.peg.2460"/>
<dbReference type="eggNOG" id="COG0097">
    <property type="taxonomic scope" value="Bacteria"/>
</dbReference>
<dbReference type="HOGENOM" id="CLU_065464_1_2_6"/>
<dbReference type="Proteomes" id="UP000000584">
    <property type="component" value="Chromosome 1"/>
</dbReference>
<dbReference type="GO" id="GO:0022625">
    <property type="term" value="C:cytosolic large ribosomal subunit"/>
    <property type="evidence" value="ECO:0000318"/>
    <property type="project" value="GO_Central"/>
</dbReference>
<dbReference type="GO" id="GO:0019843">
    <property type="term" value="F:rRNA binding"/>
    <property type="evidence" value="ECO:0007669"/>
    <property type="project" value="UniProtKB-UniRule"/>
</dbReference>
<dbReference type="GO" id="GO:0003735">
    <property type="term" value="F:structural constituent of ribosome"/>
    <property type="evidence" value="ECO:0000318"/>
    <property type="project" value="GO_Central"/>
</dbReference>
<dbReference type="GO" id="GO:0002181">
    <property type="term" value="P:cytoplasmic translation"/>
    <property type="evidence" value="ECO:0000318"/>
    <property type="project" value="GO_Central"/>
</dbReference>
<dbReference type="FunFam" id="3.90.930.12:FF:000001">
    <property type="entry name" value="50S ribosomal protein L6"/>
    <property type="match status" value="1"/>
</dbReference>
<dbReference type="FunFam" id="3.90.930.12:FF:000002">
    <property type="entry name" value="50S ribosomal protein L6"/>
    <property type="match status" value="1"/>
</dbReference>
<dbReference type="Gene3D" id="3.90.930.12">
    <property type="entry name" value="Ribosomal protein L6, alpha-beta domain"/>
    <property type="match status" value="2"/>
</dbReference>
<dbReference type="HAMAP" id="MF_01365_B">
    <property type="entry name" value="Ribosomal_uL6_B"/>
    <property type="match status" value="1"/>
</dbReference>
<dbReference type="InterPro" id="IPR000702">
    <property type="entry name" value="Ribosomal_uL6-like"/>
</dbReference>
<dbReference type="InterPro" id="IPR036789">
    <property type="entry name" value="Ribosomal_uL6-like_a/b-dom_sf"/>
</dbReference>
<dbReference type="InterPro" id="IPR020040">
    <property type="entry name" value="Ribosomal_uL6_a/b-dom"/>
</dbReference>
<dbReference type="InterPro" id="IPR019906">
    <property type="entry name" value="Ribosomal_uL6_bac-type"/>
</dbReference>
<dbReference type="InterPro" id="IPR002358">
    <property type="entry name" value="Ribosomal_uL6_CS"/>
</dbReference>
<dbReference type="NCBIfam" id="TIGR03654">
    <property type="entry name" value="L6_bact"/>
    <property type="match status" value="1"/>
</dbReference>
<dbReference type="PANTHER" id="PTHR11655">
    <property type="entry name" value="60S/50S RIBOSOMAL PROTEIN L6/L9"/>
    <property type="match status" value="1"/>
</dbReference>
<dbReference type="PANTHER" id="PTHR11655:SF14">
    <property type="entry name" value="LARGE RIBOSOMAL SUBUNIT PROTEIN UL6M"/>
    <property type="match status" value="1"/>
</dbReference>
<dbReference type="Pfam" id="PF00347">
    <property type="entry name" value="Ribosomal_L6"/>
    <property type="match status" value="2"/>
</dbReference>
<dbReference type="PIRSF" id="PIRSF002162">
    <property type="entry name" value="Ribosomal_L6"/>
    <property type="match status" value="1"/>
</dbReference>
<dbReference type="PRINTS" id="PR00059">
    <property type="entry name" value="RIBOSOMALL6"/>
</dbReference>
<dbReference type="SUPFAM" id="SSF56053">
    <property type="entry name" value="Ribosomal protein L6"/>
    <property type="match status" value="2"/>
</dbReference>
<dbReference type="PROSITE" id="PS00525">
    <property type="entry name" value="RIBOSOMAL_L6_1"/>
    <property type="match status" value="1"/>
</dbReference>
<feature type="chain" id="PRO_0000131075" description="Large ribosomal subunit protein uL6">
    <location>
        <begin position="1"/>
        <end position="177"/>
    </location>
</feature>
<gene>
    <name evidence="1" type="primary">rplF</name>
    <name type="ordered locus">VC_2581</name>
</gene>
<organism>
    <name type="scientific">Vibrio cholerae serotype O1 (strain ATCC 39315 / El Tor Inaba N16961)</name>
    <dbReference type="NCBI Taxonomy" id="243277"/>
    <lineage>
        <taxon>Bacteria</taxon>
        <taxon>Pseudomonadati</taxon>
        <taxon>Pseudomonadota</taxon>
        <taxon>Gammaproteobacteria</taxon>
        <taxon>Vibrionales</taxon>
        <taxon>Vibrionaceae</taxon>
        <taxon>Vibrio</taxon>
    </lineage>
</organism>
<accession>Q9KNZ9</accession>
<reference key="1">
    <citation type="journal article" date="2000" name="Nature">
        <title>DNA sequence of both chromosomes of the cholera pathogen Vibrio cholerae.</title>
        <authorList>
            <person name="Heidelberg J.F."/>
            <person name="Eisen J.A."/>
            <person name="Nelson W.C."/>
            <person name="Clayton R.A."/>
            <person name="Gwinn M.L."/>
            <person name="Dodson R.J."/>
            <person name="Haft D.H."/>
            <person name="Hickey E.K."/>
            <person name="Peterson J.D."/>
            <person name="Umayam L.A."/>
            <person name="Gill S.R."/>
            <person name="Nelson K.E."/>
            <person name="Read T.D."/>
            <person name="Tettelin H."/>
            <person name="Richardson D.L."/>
            <person name="Ermolaeva M.D."/>
            <person name="Vamathevan J.J."/>
            <person name="Bass S."/>
            <person name="Qin H."/>
            <person name="Dragoi I."/>
            <person name="Sellers P."/>
            <person name="McDonald L.A."/>
            <person name="Utterback T.R."/>
            <person name="Fleischmann R.D."/>
            <person name="Nierman W.C."/>
            <person name="White O."/>
            <person name="Salzberg S.L."/>
            <person name="Smith H.O."/>
            <person name="Colwell R.R."/>
            <person name="Mekalanos J.J."/>
            <person name="Venter J.C."/>
            <person name="Fraser C.M."/>
        </authorList>
    </citation>
    <scope>NUCLEOTIDE SEQUENCE [LARGE SCALE GENOMIC DNA]</scope>
    <source>
        <strain>ATCC 39315 / El Tor Inaba N16961</strain>
    </source>
</reference>